<dbReference type="EMBL" id="U80036">
    <property type="protein sequence ID" value="AAB38505.1"/>
    <property type="molecule type" value="mRNA"/>
</dbReference>
<dbReference type="EMBL" id="U80010">
    <property type="protein sequence ID" value="AAC53119.1"/>
    <property type="molecule type" value="mRNA"/>
</dbReference>
<dbReference type="EMBL" id="U80011">
    <property type="protein sequence ID" value="AAC53120.1"/>
    <property type="molecule type" value="mRNA"/>
</dbReference>
<dbReference type="EMBL" id="AB006320">
    <property type="protein sequence ID" value="BAA75247.1"/>
    <property type="molecule type" value="mRNA"/>
</dbReference>
<dbReference type="EMBL" id="AB006321">
    <property type="protein sequence ID" value="BAA75248.1"/>
    <property type="molecule type" value="mRNA"/>
</dbReference>
<dbReference type="EMBL" id="AF048723">
    <property type="protein sequence ID" value="AAC40086.1"/>
    <property type="molecule type" value="mRNA"/>
</dbReference>
<dbReference type="EMBL" id="AF048724">
    <property type="protein sequence ID" value="AAC40087.1"/>
    <property type="molecule type" value="mRNA"/>
</dbReference>
<dbReference type="EMBL" id="AJ243597">
    <property type="protein sequence ID" value="CAB65259.1"/>
    <property type="molecule type" value="mRNA"/>
</dbReference>
<dbReference type="EMBL" id="AF201091">
    <property type="protein sequence ID" value="AAF44618.1"/>
    <property type="status" value="ALT_INIT"/>
    <property type="molecule type" value="mRNA"/>
</dbReference>
<dbReference type="EMBL" id="U70132">
    <property type="protein sequence ID" value="AAB38864.1"/>
    <property type="molecule type" value="mRNA"/>
</dbReference>
<dbReference type="CCDS" id="CCDS17830.1">
    <molecule id="P97474-1"/>
</dbReference>
<dbReference type="CCDS" id="CCDS38630.1">
    <molecule id="P97474-3"/>
</dbReference>
<dbReference type="CCDS" id="CCDS38631.1">
    <molecule id="P97474-2"/>
</dbReference>
<dbReference type="CCDS" id="CCDS71316.1">
    <molecule id="P97474-4"/>
</dbReference>
<dbReference type="RefSeq" id="NP_001035967.1">
    <molecule id="P97474-2"/>
    <property type="nucleotide sequence ID" value="NM_001042502.2"/>
</dbReference>
<dbReference type="RefSeq" id="NP_001035969.1">
    <molecule id="P97474-3"/>
    <property type="nucleotide sequence ID" value="NM_001042504.2"/>
</dbReference>
<dbReference type="RefSeq" id="NP_001273871.1">
    <molecule id="P97474-4"/>
    <property type="nucleotide sequence ID" value="NM_001286942.1"/>
</dbReference>
<dbReference type="RefSeq" id="NP_001273977.1">
    <molecule id="P97474-5"/>
    <property type="nucleotide sequence ID" value="NM_001287048.1"/>
</dbReference>
<dbReference type="RefSeq" id="NP_035228.2">
    <molecule id="P97474-1"/>
    <property type="nucleotide sequence ID" value="NM_011098.4"/>
</dbReference>
<dbReference type="RefSeq" id="XP_006501194.1">
    <molecule id="P97474-1"/>
    <property type="nucleotide sequence ID" value="XM_006501131.5"/>
</dbReference>
<dbReference type="RefSeq" id="XP_006501195.1">
    <molecule id="P97474-3"/>
    <property type="nucleotide sequence ID" value="XM_006501132.3"/>
</dbReference>
<dbReference type="RefSeq" id="XP_006501196.1">
    <molecule id="P97474-3"/>
    <property type="nucleotide sequence ID" value="XM_006501133.3"/>
</dbReference>
<dbReference type="BMRB" id="P97474"/>
<dbReference type="SMR" id="P97474"/>
<dbReference type="BioGRID" id="202187">
    <property type="interactions" value="3"/>
</dbReference>
<dbReference type="DIP" id="DIP-37454N"/>
<dbReference type="FunCoup" id="P97474">
    <property type="interactions" value="1779"/>
</dbReference>
<dbReference type="IntAct" id="P97474">
    <property type="interactions" value="3"/>
</dbReference>
<dbReference type="STRING" id="10090.ENSMUSP00000047359"/>
<dbReference type="GlyGen" id="P97474">
    <property type="glycosylation" value="2 sites"/>
</dbReference>
<dbReference type="iPTMnet" id="P97474"/>
<dbReference type="PhosphoSitePlus" id="P97474"/>
<dbReference type="PaxDb" id="10090-ENSMUSP00000047359"/>
<dbReference type="ProteomicsDB" id="289582">
    <molecule id="P97474-1"/>
</dbReference>
<dbReference type="ProteomicsDB" id="289583">
    <molecule id="P97474-2"/>
</dbReference>
<dbReference type="ProteomicsDB" id="289584">
    <molecule id="P97474-3"/>
</dbReference>
<dbReference type="ProteomicsDB" id="289585">
    <molecule id="P97474-4"/>
</dbReference>
<dbReference type="ProteomicsDB" id="289586">
    <molecule id="P97474-5"/>
</dbReference>
<dbReference type="DNASU" id="18741"/>
<dbReference type="Ensembl" id="ENSMUST00000042587.12">
    <molecule id="P97474-2"/>
    <property type="protein sequence ID" value="ENSMUSP00000047359.10"/>
    <property type="gene ID" value="ENSMUSG00000028023.17"/>
</dbReference>
<dbReference type="Ensembl" id="ENSMUST00000106382.11">
    <molecule id="P97474-3"/>
    <property type="protein sequence ID" value="ENSMUSP00000101990.5"/>
    <property type="gene ID" value="ENSMUSG00000028023.17"/>
</dbReference>
<dbReference type="Ensembl" id="ENSMUST00000172645.8">
    <molecule id="P97474-4"/>
    <property type="protein sequence ID" value="ENSMUSP00000134692.2"/>
    <property type="gene ID" value="ENSMUSG00000028023.17"/>
</dbReference>
<dbReference type="Ensembl" id="ENSMUST00000174661.9">
    <molecule id="P97474-1"/>
    <property type="protein sequence ID" value="ENSMUSP00000133756.2"/>
    <property type="gene ID" value="ENSMUSG00000028023.17"/>
</dbReference>
<dbReference type="GeneID" id="18741"/>
<dbReference type="KEGG" id="mmu:18741"/>
<dbReference type="UCSC" id="uc008rhu.2">
    <molecule id="P97474-1"/>
    <property type="organism name" value="mouse"/>
</dbReference>
<dbReference type="UCSC" id="uc008rhv.2">
    <molecule id="P97474-3"/>
    <property type="organism name" value="mouse"/>
</dbReference>
<dbReference type="AGR" id="MGI:109340"/>
<dbReference type="CTD" id="5308"/>
<dbReference type="MGI" id="MGI:109340">
    <property type="gene designation" value="Pitx2"/>
</dbReference>
<dbReference type="VEuPathDB" id="HostDB:ENSMUSG00000028023"/>
<dbReference type="eggNOG" id="KOG0486">
    <property type="taxonomic scope" value="Eukaryota"/>
</dbReference>
<dbReference type="GeneTree" id="ENSGT00940000154518"/>
<dbReference type="HOGENOM" id="CLU_030301_0_0_1"/>
<dbReference type="InParanoid" id="P97474"/>
<dbReference type="OMA" id="NSMRNPL"/>
<dbReference type="OrthoDB" id="6159439at2759"/>
<dbReference type="PhylomeDB" id="P97474"/>
<dbReference type="TreeFam" id="TF351940"/>
<dbReference type="BioGRID-ORCS" id="18741">
    <property type="hits" value="4 hits in 81 CRISPR screens"/>
</dbReference>
<dbReference type="ChiTaRS" id="Pitx2">
    <property type="organism name" value="mouse"/>
</dbReference>
<dbReference type="PRO" id="PR:P97474"/>
<dbReference type="Proteomes" id="UP000000589">
    <property type="component" value="Chromosome 3"/>
</dbReference>
<dbReference type="RNAct" id="P97474">
    <property type="molecule type" value="protein"/>
</dbReference>
<dbReference type="Bgee" id="ENSMUSG00000028023">
    <property type="expression patterns" value="Expressed in calcareous tooth and 281 other cell types or tissues"/>
</dbReference>
<dbReference type="ExpressionAtlas" id="P97474">
    <property type="expression patterns" value="baseline and differential"/>
</dbReference>
<dbReference type="GO" id="GO:0005737">
    <property type="term" value="C:cytoplasm"/>
    <property type="evidence" value="ECO:0000314"/>
    <property type="project" value="MGI"/>
</dbReference>
<dbReference type="GO" id="GO:0005654">
    <property type="term" value="C:nucleoplasm"/>
    <property type="evidence" value="ECO:0007669"/>
    <property type="project" value="Ensembl"/>
</dbReference>
<dbReference type="GO" id="GO:0005634">
    <property type="term" value="C:nucleus"/>
    <property type="evidence" value="ECO:0000314"/>
    <property type="project" value="MGI"/>
</dbReference>
<dbReference type="GO" id="GO:0005667">
    <property type="term" value="C:transcription regulator complex"/>
    <property type="evidence" value="ECO:0000314"/>
    <property type="project" value="MGI"/>
</dbReference>
<dbReference type="GO" id="GO:0003682">
    <property type="term" value="F:chromatin binding"/>
    <property type="evidence" value="ECO:0000314"/>
    <property type="project" value="MGI"/>
</dbReference>
<dbReference type="GO" id="GO:0031490">
    <property type="term" value="F:chromatin DNA binding"/>
    <property type="evidence" value="ECO:0000314"/>
    <property type="project" value="MGI"/>
</dbReference>
<dbReference type="GO" id="GO:0003677">
    <property type="term" value="F:DNA binding"/>
    <property type="evidence" value="ECO:0000314"/>
    <property type="project" value="MGI"/>
</dbReference>
<dbReference type="GO" id="GO:0003700">
    <property type="term" value="F:DNA-binding transcription factor activity"/>
    <property type="evidence" value="ECO:0000314"/>
    <property type="project" value="MGI"/>
</dbReference>
<dbReference type="GO" id="GO:0000981">
    <property type="term" value="F:DNA-binding transcription factor activity, RNA polymerase II-specific"/>
    <property type="evidence" value="ECO:0000314"/>
    <property type="project" value="MGI"/>
</dbReference>
<dbReference type="GO" id="GO:0061629">
    <property type="term" value="F:RNA polymerase II-specific DNA-binding transcription factor binding"/>
    <property type="evidence" value="ECO:0007669"/>
    <property type="project" value="Ensembl"/>
</dbReference>
<dbReference type="GO" id="GO:0043565">
    <property type="term" value="F:sequence-specific DNA binding"/>
    <property type="evidence" value="ECO:0000314"/>
    <property type="project" value="MGI"/>
</dbReference>
<dbReference type="GO" id="GO:0000976">
    <property type="term" value="F:transcription cis-regulatory region binding"/>
    <property type="evidence" value="ECO:0007669"/>
    <property type="project" value="Ensembl"/>
</dbReference>
<dbReference type="GO" id="GO:0009653">
    <property type="term" value="P:anatomical structure morphogenesis"/>
    <property type="evidence" value="ECO:0000315"/>
    <property type="project" value="MGI"/>
</dbReference>
<dbReference type="GO" id="GO:0009887">
    <property type="term" value="P:animal organ morphogenesis"/>
    <property type="evidence" value="ECO:0000315"/>
    <property type="project" value="MGI"/>
</dbReference>
<dbReference type="GO" id="GO:0055009">
    <property type="term" value="P:atrial cardiac muscle tissue morphogenesis"/>
    <property type="evidence" value="ECO:0000315"/>
    <property type="project" value="MGI"/>
</dbReference>
<dbReference type="GO" id="GO:0003171">
    <property type="term" value="P:atrioventricular valve development"/>
    <property type="evidence" value="ECO:0000315"/>
    <property type="project" value="MGI"/>
</dbReference>
<dbReference type="GO" id="GO:0001569">
    <property type="term" value="P:branching involved in blood vessel morphogenesis"/>
    <property type="evidence" value="ECO:0000315"/>
    <property type="project" value="MGI"/>
</dbReference>
<dbReference type="GO" id="GO:0055007">
    <property type="term" value="P:cardiac muscle cell differentiation"/>
    <property type="evidence" value="ECO:0000315"/>
    <property type="project" value="MGI"/>
</dbReference>
<dbReference type="GO" id="GO:0048738">
    <property type="term" value="P:cardiac muscle tissue development"/>
    <property type="evidence" value="ECO:0000315"/>
    <property type="project" value="MGI"/>
</dbReference>
<dbReference type="GO" id="GO:0003253">
    <property type="term" value="P:cardiac neural crest cell migration involved in outflow tract morphogenesis"/>
    <property type="evidence" value="ECO:0000315"/>
    <property type="project" value="BHF-UCL"/>
</dbReference>
<dbReference type="GO" id="GO:0061325">
    <property type="term" value="P:cell proliferation involved in outflow tract morphogenesis"/>
    <property type="evidence" value="ECO:0000315"/>
    <property type="project" value="MGI"/>
</dbReference>
<dbReference type="GO" id="GO:0035993">
    <property type="term" value="P:deltoid tuberosity development"/>
    <property type="evidence" value="ECO:0000315"/>
    <property type="project" value="BHF-UCL"/>
</dbReference>
<dbReference type="GO" id="GO:0007368">
    <property type="term" value="P:determination of left/right symmetry"/>
    <property type="evidence" value="ECO:0000315"/>
    <property type="project" value="BHF-UCL"/>
</dbReference>
<dbReference type="GO" id="GO:0055123">
    <property type="term" value="P:digestive system development"/>
    <property type="evidence" value="ECO:0000315"/>
    <property type="project" value="MGI"/>
</dbReference>
<dbReference type="GO" id="GO:0031076">
    <property type="term" value="P:embryonic camera-type eye development"/>
    <property type="evidence" value="ECO:0000315"/>
    <property type="project" value="MGI"/>
</dbReference>
<dbReference type="GO" id="GO:0048557">
    <property type="term" value="P:embryonic digestive tract morphogenesis"/>
    <property type="evidence" value="ECO:0000315"/>
    <property type="project" value="MGI"/>
</dbReference>
<dbReference type="GO" id="GO:0060971">
    <property type="term" value="P:embryonic heart tube left/right pattern formation"/>
    <property type="evidence" value="ECO:0000315"/>
    <property type="project" value="BHF-UCL"/>
</dbReference>
<dbReference type="GO" id="GO:0035116">
    <property type="term" value="P:embryonic hindlimb morphogenesis"/>
    <property type="evidence" value="ECO:0000316"/>
    <property type="project" value="MGI"/>
</dbReference>
<dbReference type="GO" id="GO:0061031">
    <property type="term" value="P:endodermal digestive tract morphogenesis"/>
    <property type="evidence" value="ECO:0000315"/>
    <property type="project" value="MGI"/>
</dbReference>
<dbReference type="GO" id="GO:0002074">
    <property type="term" value="P:extraocular skeletal muscle development"/>
    <property type="evidence" value="ECO:0000315"/>
    <property type="project" value="MGI"/>
</dbReference>
<dbReference type="GO" id="GO:0007507">
    <property type="term" value="P:heart development"/>
    <property type="evidence" value="ECO:0000315"/>
    <property type="project" value="MGI"/>
</dbReference>
<dbReference type="GO" id="GO:0021855">
    <property type="term" value="P:hypothalamus cell migration"/>
    <property type="evidence" value="ECO:0000315"/>
    <property type="project" value="MGI"/>
</dbReference>
<dbReference type="GO" id="GO:0001701">
    <property type="term" value="P:in utero embryonic development"/>
    <property type="evidence" value="ECO:0000315"/>
    <property type="project" value="MGI"/>
</dbReference>
<dbReference type="GO" id="GO:0061072">
    <property type="term" value="P:iris morphogenesis"/>
    <property type="evidence" value="ECO:0007669"/>
    <property type="project" value="Ensembl"/>
</dbReference>
<dbReference type="GO" id="GO:0060460">
    <property type="term" value="P:left lung morphogenesis"/>
    <property type="evidence" value="ECO:0000315"/>
    <property type="project" value="MGI"/>
</dbReference>
<dbReference type="GO" id="GO:0070986">
    <property type="term" value="P:left/right axis specification"/>
    <property type="evidence" value="ECO:0000315"/>
    <property type="project" value="BHF-UCL"/>
</dbReference>
<dbReference type="GO" id="GO:0030324">
    <property type="term" value="P:lung development"/>
    <property type="evidence" value="ECO:0000315"/>
    <property type="project" value="MGI"/>
</dbReference>
<dbReference type="GO" id="GO:0007520">
    <property type="term" value="P:myoblast fusion"/>
    <property type="evidence" value="ECO:0000314"/>
    <property type="project" value="MGI"/>
</dbReference>
<dbReference type="GO" id="GO:0001764">
    <property type="term" value="P:neuron migration"/>
    <property type="evidence" value="ECO:0000315"/>
    <property type="project" value="MGI"/>
</dbReference>
<dbReference type="GO" id="GO:0042476">
    <property type="term" value="P:odontogenesis"/>
    <property type="evidence" value="ECO:0000315"/>
    <property type="project" value="MGI"/>
</dbReference>
<dbReference type="GO" id="GO:0003151">
    <property type="term" value="P:outflow tract morphogenesis"/>
    <property type="evidence" value="ECO:0000315"/>
    <property type="project" value="BHF-UCL"/>
</dbReference>
<dbReference type="GO" id="GO:0021983">
    <property type="term" value="P:pituitary gland development"/>
    <property type="evidence" value="ECO:0000315"/>
    <property type="project" value="MGI"/>
</dbReference>
<dbReference type="GO" id="GO:0008284">
    <property type="term" value="P:positive regulation of cell population proliferation"/>
    <property type="evidence" value="ECO:0000315"/>
    <property type="project" value="BHF-UCL"/>
</dbReference>
<dbReference type="GO" id="GO:0045893">
    <property type="term" value="P:positive regulation of DNA-templated transcription"/>
    <property type="evidence" value="ECO:0000315"/>
    <property type="project" value="MGI"/>
</dbReference>
<dbReference type="GO" id="GO:2000288">
    <property type="term" value="P:positive regulation of myoblast proliferation"/>
    <property type="evidence" value="ECO:0000314"/>
    <property type="project" value="MGI"/>
</dbReference>
<dbReference type="GO" id="GO:0045944">
    <property type="term" value="P:positive regulation of transcription by RNA polymerase II"/>
    <property type="evidence" value="ECO:0000314"/>
    <property type="project" value="MGI"/>
</dbReference>
<dbReference type="GO" id="GO:0003350">
    <property type="term" value="P:pulmonary myocardium development"/>
    <property type="evidence" value="ECO:0000315"/>
    <property type="project" value="MGI"/>
</dbReference>
<dbReference type="GO" id="GO:0060577">
    <property type="term" value="P:pulmonary vein morphogenesis"/>
    <property type="evidence" value="ECO:0000315"/>
    <property type="project" value="MGI"/>
</dbReference>
<dbReference type="GO" id="GO:0030334">
    <property type="term" value="P:regulation of cell migration"/>
    <property type="evidence" value="ECO:0000315"/>
    <property type="project" value="MGI"/>
</dbReference>
<dbReference type="GO" id="GO:0042127">
    <property type="term" value="P:regulation of cell population proliferation"/>
    <property type="evidence" value="ECO:0000315"/>
    <property type="project" value="MGI"/>
</dbReference>
<dbReference type="GO" id="GO:0006357">
    <property type="term" value="P:regulation of transcription by RNA polymerase II"/>
    <property type="evidence" value="ECO:0000314"/>
    <property type="project" value="MGI"/>
</dbReference>
<dbReference type="GO" id="GO:0007519">
    <property type="term" value="P:skeletal muscle tissue development"/>
    <property type="evidence" value="ECO:0000315"/>
    <property type="project" value="MGI"/>
</dbReference>
<dbReference type="GO" id="GO:0048536">
    <property type="term" value="P:spleen development"/>
    <property type="evidence" value="ECO:0000315"/>
    <property type="project" value="BHF-UCL"/>
</dbReference>
<dbReference type="GO" id="GO:0021763">
    <property type="term" value="P:subthalamic nucleus development"/>
    <property type="evidence" value="ECO:0000315"/>
    <property type="project" value="MGI"/>
</dbReference>
<dbReference type="GO" id="GO:0060578">
    <property type="term" value="P:superior vena cava morphogenesis"/>
    <property type="evidence" value="ECO:0000315"/>
    <property type="project" value="MGI"/>
</dbReference>
<dbReference type="GO" id="GO:0035886">
    <property type="term" value="P:vascular associated smooth muscle cell differentiation"/>
    <property type="evidence" value="ECO:0000315"/>
    <property type="project" value="MGI"/>
</dbReference>
<dbReference type="GO" id="GO:0001570">
    <property type="term" value="P:vasculogenesis"/>
    <property type="evidence" value="ECO:0000315"/>
    <property type="project" value="MGI"/>
</dbReference>
<dbReference type="GO" id="GO:0055015">
    <property type="term" value="P:ventricular cardiac muscle cell development"/>
    <property type="evidence" value="ECO:0000315"/>
    <property type="project" value="MGI"/>
</dbReference>
<dbReference type="GO" id="GO:0060412">
    <property type="term" value="P:ventricular septum morphogenesis"/>
    <property type="evidence" value="ECO:0000315"/>
    <property type="project" value="MGI"/>
</dbReference>
<dbReference type="GO" id="GO:0016055">
    <property type="term" value="P:Wnt signaling pathway"/>
    <property type="evidence" value="ECO:0000314"/>
    <property type="project" value="MGI"/>
</dbReference>
<dbReference type="CDD" id="cd00086">
    <property type="entry name" value="homeodomain"/>
    <property type="match status" value="1"/>
</dbReference>
<dbReference type="FunFam" id="1.10.10.60:FF:000031">
    <property type="entry name" value="Homeobox protein"/>
    <property type="match status" value="1"/>
</dbReference>
<dbReference type="Gene3D" id="1.10.10.60">
    <property type="entry name" value="Homeodomain-like"/>
    <property type="match status" value="1"/>
</dbReference>
<dbReference type="InterPro" id="IPR001356">
    <property type="entry name" value="HD"/>
</dbReference>
<dbReference type="InterPro" id="IPR017970">
    <property type="entry name" value="Homeobox_CS"/>
</dbReference>
<dbReference type="InterPro" id="IPR016233">
    <property type="entry name" value="Homeobox_Pitx/unc30"/>
</dbReference>
<dbReference type="InterPro" id="IPR009057">
    <property type="entry name" value="Homeodomain-like_sf"/>
</dbReference>
<dbReference type="InterPro" id="IPR003654">
    <property type="entry name" value="OAR_dom"/>
</dbReference>
<dbReference type="PANTHER" id="PTHR45882:SF4">
    <property type="entry name" value="PITUITARY HOMEOBOX 2"/>
    <property type="match status" value="1"/>
</dbReference>
<dbReference type="PANTHER" id="PTHR45882">
    <property type="entry name" value="PITUITARY HOMEOBOX HOMOLOG PTX1"/>
    <property type="match status" value="1"/>
</dbReference>
<dbReference type="Pfam" id="PF00046">
    <property type="entry name" value="Homeodomain"/>
    <property type="match status" value="1"/>
</dbReference>
<dbReference type="Pfam" id="PF03826">
    <property type="entry name" value="OAR"/>
    <property type="match status" value="1"/>
</dbReference>
<dbReference type="PIRSF" id="PIRSF000563">
    <property type="entry name" value="Homeobox_protein_Pitx/Unc30"/>
    <property type="match status" value="1"/>
</dbReference>
<dbReference type="SMART" id="SM00389">
    <property type="entry name" value="HOX"/>
    <property type="match status" value="1"/>
</dbReference>
<dbReference type="SUPFAM" id="SSF46689">
    <property type="entry name" value="Homeodomain-like"/>
    <property type="match status" value="1"/>
</dbReference>
<dbReference type="PROSITE" id="PS00027">
    <property type="entry name" value="HOMEOBOX_1"/>
    <property type="match status" value="1"/>
</dbReference>
<dbReference type="PROSITE" id="PS50071">
    <property type="entry name" value="HOMEOBOX_2"/>
    <property type="match status" value="1"/>
</dbReference>
<dbReference type="PROSITE" id="PS50803">
    <property type="entry name" value="OAR"/>
    <property type="match status" value="1"/>
</dbReference>
<reference key="1">
    <citation type="submission" date="1997-01" db="EMBL/GenBank/DDBJ databases">
        <authorList>
            <person name="Mucchielli M.L."/>
            <person name="Martinez S."/>
            <person name="Pattyn A."/>
            <person name="Goridis C."/>
            <person name="Brunet J.-F."/>
        </authorList>
    </citation>
    <scope>NUCLEOTIDE SEQUENCE [MRNA] (ISOFORM PTX2A)</scope>
</reference>
<reference key="2">
    <citation type="journal article" date="1997" name="Hum. Mol. Genet.">
        <title>Pituitary homeobox 2, a novel member of the bicoid-related family of homeobox genes, is a potential regulator of anterior structure formation.</title>
        <authorList>
            <person name="Gage P.J."/>
            <person name="Camper S.A."/>
        </authorList>
    </citation>
    <scope>NUCLEOTIDE SEQUENCE [MRNA] (ISOFORMS PTX2A AND PTX2B)</scope>
    <scope>TISSUE SPECIFICITY</scope>
    <scope>DEVELOPMENTAL STAGE</scope>
    <source>
        <tissue>Pituitary</tissue>
    </source>
</reference>
<reference key="3">
    <citation type="journal article" date="1997" name="Mech. Dev.">
        <title>Expression patterns of Brx1 (Rieg gene), Sonic hedgehog, Nkx2.2, Dlx1 and Arx during zona limitans intrathalamica and embryonic ventral lateral geniculate nuclear formation.</title>
        <authorList>
            <person name="Kitamura K."/>
            <person name="Miura H."/>
            <person name="Yanazawa M."/>
            <person name="Miyashita T."/>
            <person name="Kato K."/>
        </authorList>
    </citation>
    <scope>NUCLEOTIDE SEQUENCE [MRNA] (ISOFORMS PTX2B AND PTX2C)</scope>
    <scope>DEVELOPMENTAL STAGE</scope>
</reference>
<reference key="4">
    <citation type="journal article" date="1998" name="Proc. Natl. Acad. Sci. U.S.A.">
        <title>Identification and characterization of the ARP1 gene, a target for the human acute leukemia ALL1 gene.</title>
        <authorList>
            <person name="Arakawa H."/>
            <person name="Nakamura T."/>
            <person name="Zhadanov A.B."/>
            <person name="Fidanza Y."/>
            <person name="Yano T."/>
            <person name="Bullrich F."/>
            <person name="Shimizu M."/>
            <person name="Blechman J."/>
            <person name="Mazo A."/>
            <person name="Canaani E."/>
            <person name="Croce C.M."/>
        </authorList>
    </citation>
    <scope>NUCLEOTIDE SEQUENCE [MRNA] (ISOFORMS PTX2A AND PTX2C)</scope>
    <scope>DEVELOPMENTAL STAGE</scope>
</reference>
<reference key="5">
    <citation type="journal article" date="2000" name="Mech. Dev.">
        <title>Pitx2 isoforms: involvement of Pitx2c but not Pitx2a or Pitx2b in vertebrate left-right asymmetry.</title>
        <authorList>
            <person name="Schweickert A."/>
            <person name="Campione M."/>
            <person name="Steinbeisser H."/>
            <person name="Blum M."/>
        </authorList>
    </citation>
    <scope>NUCLEOTIDE SEQUENCE [MRNA] OF 1-61 (ISOFORM PTX2C)</scope>
    <scope>FUNCTION</scope>
    <scope>DEVELOPMENTAL STAGE</scope>
</reference>
<reference key="6">
    <citation type="journal article" date="2001" name="Cell Biol. Int.">
        <title>Cloning and expression of Munc 30: a member of the paired-like homeodomain gene family.</title>
        <authorList>
            <person name="Nicholson L.F.B."/>
            <person name="Ma L."/>
            <person name="Goulding M."/>
        </authorList>
    </citation>
    <scope>PARTIAL NUCLEOTIDE SEQUENCE [MRNA] (ISOFORM PTX2C)</scope>
    <scope>TISSUE SPECIFICITY</scope>
    <source>
        <tissue>Embryo</tissue>
    </source>
</reference>
<reference key="7">
    <citation type="journal article" date="1996" name="Nat. Genet.">
        <title>Cloning and characterization of a novel bicoid-related homeobox transcription factor gene, RIEG, involved in Rieger syndrome.</title>
        <authorList>
            <person name="Semina E.V."/>
            <person name="Reiter R."/>
            <person name="Leysens N.J."/>
            <person name="Alward W.L.M."/>
            <person name="Small K.W."/>
            <person name="Datson N.A."/>
            <person name="Siegle-Bartelt J."/>
            <person name="Bierke-Nelson D."/>
            <person name="Bitoun P."/>
            <person name="Zabel B.U."/>
            <person name="Carey J.C."/>
            <person name="Murray J.C."/>
        </authorList>
    </citation>
    <scope>NUCLEOTIDE SEQUENCE [MRNA] OF 63-317</scope>
    <scope>DEVELOPMENTAL STAGE</scope>
    <source>
        <tissue>Embryonic carcinoma</tissue>
    </source>
</reference>
<reference key="8">
    <citation type="unpublished observations" date="2008-01">
        <title>Novel forms of paired-like homeodomain transcription factor 2 (PITX2): generation by alternative translation initiation and mRNA splicing.</title>
        <authorList>
            <person name="Lamba P."/>
            <person name="Hjalt T.A."/>
            <person name="Bernard D.J."/>
        </authorList>
    </citation>
    <scope>ALTERNATIVE SPLICING (ISOFORM PITX2CALPHA) AND ALTERNATIVE INITIATION (ISOFORM PITX2CBETA)</scope>
</reference>
<reference key="9">
    <citation type="journal article" date="2004" name="Nat. Genet.">
        <title>Cited2 controls left-right patterning and heart development through a Nodal-Pitx2c pathway.</title>
        <authorList>
            <person name="Bamforth S.D."/>
            <person name="Braganca J."/>
            <person name="Farthing C.R."/>
            <person name="Schneider J.E."/>
            <person name="Broadbent C."/>
            <person name="Michell A.C."/>
            <person name="Clarke K."/>
            <person name="Neubauer S."/>
            <person name="Norris D."/>
            <person name="Brown N.A."/>
            <person name="Anderson R.H."/>
            <person name="Bhattacharya S."/>
        </authorList>
    </citation>
    <scope>FUNCTION</scope>
    <scope>DISRUPTION PHENOTYPE</scope>
    <scope>DEVELOPMENTAL STAGE</scope>
    <scope>INDUCTION BY CITED2; TFAP2A AND TFAP2C</scope>
</reference>
<reference key="10">
    <citation type="journal article" date="2010" name="Cell Death Differ.">
        <title>Akt2-mediated phosphorylation of Pitx2 controls Ccnd1 mRNA decay during muscle cell differentiation.</title>
        <authorList>
            <person name="Gherzi R."/>
            <person name="Trabucchi M."/>
            <person name="Ponassi M."/>
            <person name="Gallouzi I.E."/>
            <person name="Rosenfeld M.G."/>
            <person name="Briata P."/>
        </authorList>
    </citation>
    <scope>PHOSPHORYLATION AT THR-90</scope>
    <scope>FUNCTION</scope>
    <scope>MUTAGENESIS OF THR-90</scope>
    <scope>SUBCELLULAR LOCATION</scope>
    <scope>INTERACTION WITH ELAVL1</scope>
</reference>
<sequence>METNCRKLVSACVQLGVQPAAVECLFSKDSEIKKVEFTDSPKSRKESASSKLFPRQHPGANEKDKGQQGKNEDVGAEDPSKKKRQRRQRTHFTSQQLQELEATFQRNRYPDMSTREEIAVWTNLTEARVRVWFKNRRAKWRKRERNQQAELCKNGFGPQFNGLMQPYDDMYPGYSYNNWAAKGLTSASLSTKSFPFFNSMNVNPLSSQSMFSPPNSISSMSMSSSMVPSAVTGVPGSSLNSLNNLNNLSSPSLNSAVPTPACPYAPPTPPYVYRDTCNSSLASLRLKAKQHSSFGYASVQNPASNLSACQYAVDRPV</sequence>
<gene>
    <name evidence="23" type="primary">Pitx2</name>
    <name evidence="20" type="synonym">Arp1</name>
    <name evidence="19" type="synonym">Brx1</name>
    <name type="synonym">Otlx2</name>
    <name evidence="18" type="synonym">Ptx2</name>
    <name type="synonym">Rgs</name>
    <name evidence="17" type="synonym">Rieg</name>
</gene>
<comment type="function">
    <text evidence="9">May play a role in myoblast differentiation. When unphosphorylated, associates with an ELAVL1-containing complex, which stabilizes cyclin mRNA and ensuring cell proliferation. Phosphorylation by AKT2 impairs this association, leading to CCND1 mRNA destabilization and progression towards differentiation.</text>
</comment>
<comment type="function">
    <molecule>Isoform Ptx2c</molecule>
    <text evidence="6">Involved in the establishment of left-right asymmetry in the developing embryo.</text>
</comment>
<comment type="subunit">
    <text evidence="1 9">Interacts with EFEMP2 (By similarity). Interacts (when unphosphorylated on Thr-90) with ELAVL1/HUR (PubMed:20019746).</text>
</comment>
<comment type="interaction">
    <interactant intactId="EBI-1175125">
        <id>P97474</id>
    </interactant>
    <interactant intactId="EBI-642563">
        <id>Q60795</id>
        <label>Nfe2l2</label>
    </interactant>
    <organismsDiffer>false</organismsDiffer>
    <experiments>2</experiments>
</comment>
<comment type="interaction">
    <interactant intactId="EBI-1175125">
        <id>P97474</id>
    </interactant>
    <interactant intactId="EBI-1211949">
        <id>P46938</id>
        <label>Yap1</label>
    </interactant>
    <organismsDiffer>false</organismsDiffer>
    <experiments>2</experiments>
</comment>
<comment type="subcellular location">
    <subcellularLocation>
        <location evidence="22">Nucleus</location>
    </subcellularLocation>
    <subcellularLocation>
        <location evidence="9">Cytoplasm</location>
    </subcellularLocation>
</comment>
<comment type="alternative products">
    <event type="alternative splicing"/>
    <event type="alternative initiation"/>
    <isoform>
        <id>P97474-1</id>
        <name evidence="18">Ptx2b</name>
        <name>ARP1B</name>
        <name evidence="19">Brx1b</name>
        <name evidence="16">Pitx2c</name>
        <sequence type="displayed"/>
    </isoform>
    <isoform>
        <id>P97474-2</id>
        <name evidence="14">Ptx2c</name>
        <name evidence="20">ARP1c</name>
        <name evidence="19">Brx1a</name>
        <name evidence="15">Munc30</name>
        <sequence type="described" ref="VSP_002262"/>
    </isoform>
    <isoform>
        <id>P97474-3</id>
        <name evidence="18">Ptx2a</name>
        <name evidence="20">ARP1a</name>
        <sequence type="described" ref="VSP_002263"/>
    </isoform>
    <isoform>
        <id>P97474-4</id>
        <name>Pitx2Calpha</name>
        <sequence type="described" ref="VSP_031522"/>
    </isoform>
    <isoform>
        <id>P97474-5</id>
        <name>Pitx2Cbeta</name>
        <sequence type="described" ref="VSP_031521"/>
    </isoform>
</comment>
<comment type="tissue specificity">
    <text evidence="7 11">Expressed in pituitary gland, brain, heart, kidney, eye, lung, testis, tongue, spinal cord and skeletal muscle.</text>
</comment>
<comment type="developmental stage">
    <text evidence="10 11 12 13">Detected as early as 8.5 dpc (PubMed:9147650). At 9.5 dpc, detected in ectodermal cells in first branchial arch, ventrolateral dermomyotome of early somites and neural tissues (PubMed:9539779). In the developing brain, at 9.5-11.5 dpc, expressed in the ventral diencephalon and zona limitans intrathalamica (ZLI), as well as in the lateral plate mesenchyme, mandibular and maxillary epithelium and the vitelline and umbilical vessels (PubMed:8944018, PubMed:9347917). At 11.5 dpc, also detected in the mesenchyme around the eye, Rathke's pouch, the dental lamina, the limb mesenchyme and the dorsal mesentery (PubMed:8944018). At 12.5 dpc, detected in the ZLI and in the mammillary area, as well as in Rathke's pouch. At 14.5 dpc, expressed in early ventral lateral geniculate nucleus. At 18.5 dpc, expressed along the anterioposterior axis in the ventral lateral geniculate nucleus (PubMed:9347917).</text>
</comment>
<comment type="developmental stage">
    <molecule>Isoform Ptx2c</molecule>
    <text evidence="6 8">At 8.5 dpc, expressed asymmetrically in the left lateral plate mesoderm and symmetrically in the head mesoderm (PubMed:10585561, PubMed:15475956). At 13.5 dpc, expressed in the heart, in the left atrium and right ventricle. At this stage, also expressed in the gastro-intestinal tract, in the left side of the stomach, the cecum, the small intestine and the superior mesenteric artery (PubMed:10585561). In the developing heart, at 15.5 dpc, expressed in the ventral aspects of the outflow tract region and of the right ventricle and also in the left atrium (PubMed:15475956).</text>
</comment>
<comment type="induction">
    <text evidence="8">Expression is activated by CITED2 and TFAP2A and TFAP2C.</text>
</comment>
<comment type="PTM">
    <text evidence="9">Phosphorylated at Thr-90 by AKT2, but not AKT1. Phosphorylation impairs its association with a CCND1 mRNA-stabilizing complex, thus shortening the half-life of CCND1.</text>
</comment>
<comment type="disruption phenotype">
    <molecule>Isoform Ptx2c</molecule>
    <text evidence="8">Knockout embryos exhibit cardiac and laterality defects. Embryos have defects in the aortic arch vessels, such as double-outlet right ventricle and right-sided or double aortic arches. Most have bilateral, left-sided or midline inferior caval veins, right atrial and pulmonary isomerism. None have abnormal ventricular topology, but some have malposition of the heart to the right and the hearts of the remaining embryos are in the midline rather than to the left. In addition, most embryos have ventricular septal defects with associated double-outlet right ventricle. Some embryos show right-sided aortic arches and some have right-sided stomachs or, in one case, a midline stomach. The spleen is absent or small. Unlike mice lacking all Pitx2 isoforms, Pitx2c-specific knockout embryos have no defects in ventral body wall closure.</text>
</comment>
<comment type="miscellaneous">
    <molecule>Isoform Pitx2Cbeta</molecule>
    <text evidence="22">Produced by alternative initiation at Met-35 of isoform Ptx2C.</text>
</comment>
<comment type="similarity">
    <text evidence="22">Belongs to the paired homeobox family. Bicoid subfamily.</text>
</comment>
<comment type="sequence caution" evidence="22">
    <conflict type="erroneous initiation">
        <sequence resource="EMBL-CDS" id="AAF44618"/>
    </conflict>
    <text>Extended N-terminus.</text>
</comment>
<protein>
    <recommendedName>
        <fullName evidence="22">Pituitary homeobox 2</fullName>
    </recommendedName>
    <alternativeName>
        <fullName evidence="20">ALL1-responsive protein ARP1</fullName>
    </alternativeName>
    <alternativeName>
        <fullName>BRX1 homeoprotein</fullName>
    </alternativeName>
    <alternativeName>
        <fullName evidence="19">Bicoid-related homeobox protein 1</fullName>
    </alternativeName>
    <alternativeName>
        <fullName>Homeobox protein PITX2</fullName>
    </alternativeName>
    <alternativeName>
        <fullName>Orthodenticle-like homeobox 2</fullName>
    </alternativeName>
    <alternativeName>
        <fullName>Paired-like homeodomain transcription factor 2</fullName>
    </alternativeName>
    <alternativeName>
        <fullName evidence="17">Solurshin</fullName>
    </alternativeName>
</protein>
<feature type="chain" id="PRO_0000049224" description="Pituitary homeobox 2">
    <location>
        <begin position="1"/>
        <end position="317"/>
    </location>
</feature>
<feature type="DNA-binding region" description="Homeobox" evidence="3">
    <location>
        <begin position="85"/>
        <end position="144"/>
    </location>
</feature>
<feature type="region of interest" description="Disordered" evidence="5">
    <location>
        <begin position="35"/>
        <end position="99"/>
    </location>
</feature>
<feature type="short sequence motif" description="OAR" evidence="4">
    <location>
        <begin position="279"/>
        <end position="292"/>
    </location>
</feature>
<feature type="short sequence motif" description="Nuclear localization signal" evidence="2">
    <location>
        <begin position="285"/>
        <end position="289"/>
    </location>
</feature>
<feature type="compositionally biased region" description="Basic and acidic residues" evidence="5">
    <location>
        <begin position="35"/>
        <end position="48"/>
    </location>
</feature>
<feature type="compositionally biased region" description="Basic and acidic residues" evidence="5">
    <location>
        <begin position="60"/>
        <end position="73"/>
    </location>
</feature>
<feature type="compositionally biased region" description="Basic residues" evidence="5">
    <location>
        <begin position="81"/>
        <end position="90"/>
    </location>
</feature>
<feature type="modified residue" description="Phosphothreonine; by PKB/AKT2" evidence="9">
    <location>
        <position position="90"/>
    </location>
</feature>
<feature type="splice variant" id="VSP_031521" description="In isoform Pitx2Cbeta." evidence="22">
    <original>METNCRKLVSACVQLGVQPAAVECLFSKDSEIKKVEFTDSPKSRKESASSKLFPRQHPGAN</original>
    <variation>MASVLAPGQPRSLDSSKHRLEVHTISDTSSPEVA</variation>
    <location>
        <begin position="1"/>
        <end position="61"/>
    </location>
</feature>
<feature type="splice variant" id="VSP_002262" description="In isoform Ptx2c." evidence="19 20">
    <original>METNCRKLVSACVQLGVQPAAVECLFSKDSEIKKVEFTDSPKSRKESASSKLFPRQHPGAN</original>
    <variation>MNCMKGPLPLEHRAAGTKLSAASSPFCHHPQALAMASVLAPGQPRSLDSSKHRLEVHTISDTSSPEVA</variation>
    <location>
        <begin position="1"/>
        <end position="61"/>
    </location>
</feature>
<feature type="splice variant" id="VSP_002263" description="In isoform Ptx2a." evidence="18 20 21">
    <location>
        <begin position="16"/>
        <end position="61"/>
    </location>
</feature>
<feature type="splice variant" id="VSP_031522" description="In isoform Pitx2Calpha." evidence="22">
    <location>
        <begin position="16"/>
        <end position="28"/>
    </location>
</feature>
<feature type="mutagenesis site" description="Loss of phosphorylation by AKT2." evidence="9">
    <original>T</original>
    <variation>A</variation>
    <location>
        <position position="90"/>
    </location>
</feature>
<feature type="sequence conflict" description="In Ref. 3; BAA75247/BAA75248." evidence="22" ref="3">
    <original>A</original>
    <variation>T</variation>
    <location>
        <position position="187"/>
    </location>
</feature>
<proteinExistence type="evidence at protein level"/>
<evidence type="ECO:0000250" key="1">
    <source>
        <dbReference type="UniProtKB" id="Q99697"/>
    </source>
</evidence>
<evidence type="ECO:0000255" key="2"/>
<evidence type="ECO:0000255" key="3">
    <source>
        <dbReference type="PROSITE-ProRule" id="PRU00108"/>
    </source>
</evidence>
<evidence type="ECO:0000255" key="4">
    <source>
        <dbReference type="PROSITE-ProRule" id="PRU00138"/>
    </source>
</evidence>
<evidence type="ECO:0000256" key="5">
    <source>
        <dbReference type="SAM" id="MobiDB-lite"/>
    </source>
</evidence>
<evidence type="ECO:0000269" key="6">
    <source>
    </source>
</evidence>
<evidence type="ECO:0000269" key="7">
    <source>
    </source>
</evidence>
<evidence type="ECO:0000269" key="8">
    <source>
    </source>
</evidence>
<evidence type="ECO:0000269" key="9">
    <source>
    </source>
</evidence>
<evidence type="ECO:0000269" key="10">
    <source>
    </source>
</evidence>
<evidence type="ECO:0000269" key="11">
    <source>
    </source>
</evidence>
<evidence type="ECO:0000269" key="12">
    <source>
    </source>
</evidence>
<evidence type="ECO:0000269" key="13">
    <source>
    </source>
</evidence>
<evidence type="ECO:0000303" key="14">
    <source>
    </source>
</evidence>
<evidence type="ECO:0000303" key="15">
    <source>
    </source>
</evidence>
<evidence type="ECO:0000303" key="16">
    <source>
    </source>
</evidence>
<evidence type="ECO:0000303" key="17">
    <source>
    </source>
</evidence>
<evidence type="ECO:0000303" key="18">
    <source>
    </source>
</evidence>
<evidence type="ECO:0000303" key="19">
    <source>
    </source>
</evidence>
<evidence type="ECO:0000303" key="20">
    <source>
    </source>
</evidence>
<evidence type="ECO:0000303" key="21">
    <source ref="1"/>
</evidence>
<evidence type="ECO:0000305" key="22"/>
<evidence type="ECO:0000312" key="23">
    <source>
        <dbReference type="MGI" id="MGI:109340"/>
    </source>
</evidence>
<name>PITX2_MOUSE</name>
<organism>
    <name type="scientific">Mus musculus</name>
    <name type="common">Mouse</name>
    <dbReference type="NCBI Taxonomy" id="10090"/>
    <lineage>
        <taxon>Eukaryota</taxon>
        <taxon>Metazoa</taxon>
        <taxon>Chordata</taxon>
        <taxon>Craniata</taxon>
        <taxon>Vertebrata</taxon>
        <taxon>Euteleostomi</taxon>
        <taxon>Mammalia</taxon>
        <taxon>Eutheria</taxon>
        <taxon>Euarchontoglires</taxon>
        <taxon>Glires</taxon>
        <taxon>Rodentia</taxon>
        <taxon>Myomorpha</taxon>
        <taxon>Muroidea</taxon>
        <taxon>Muridae</taxon>
        <taxon>Murinae</taxon>
        <taxon>Mus</taxon>
        <taxon>Mus</taxon>
    </lineage>
</organism>
<accession>P97474</accession>
<accession>O08646</accession>
<accession>O70336</accession>
<accession>P97933</accession>
<accession>Q9JLA0</accession>
<accession>Q9QXB8</accession>
<accession>Q9R1V9</accession>
<accession>Q9Z141</accession>
<keyword id="KW-0024">Alternative initiation</keyword>
<keyword id="KW-0025">Alternative splicing</keyword>
<keyword id="KW-0963">Cytoplasm</keyword>
<keyword id="KW-0217">Developmental protein</keyword>
<keyword id="KW-0238">DNA-binding</keyword>
<keyword id="KW-0371">Homeobox</keyword>
<keyword id="KW-0539">Nucleus</keyword>
<keyword id="KW-0597">Phosphoprotein</keyword>
<keyword id="KW-1185">Reference proteome</keyword>